<comment type="function">
    <text evidence="1 4 9">Exports glutathione-coordinated iron-sulfur clusters such as [2Fe-2S]-(GS)4 cluster from the mitochondria to the cytosol in an ATP-dependent manner allowing the assembly of the cytosolic iron-sulfur (Fe/S) cluster-containing proteins and participates in iron homeostasis (By similarity). Moreover, through a functional complex formed of ABCB7, FECH and ABCB10, also plays a role in the cellular iron homeostasis, mitochondrial function and heme biosynthesis (By similarity). In cardiomyocytes, regulates cellular iron homeostasis and cellular reactive oxygen species (ROS) levels through its interaction with COX4I1 (PubMed:31511561). May also play a role in hematopoiesis (By similarity).</text>
</comment>
<comment type="catalytic activity">
    <reaction evidence="1">
        <text>(glutathione)4[2Fe(III)-2S] cluster(in) + ATP + H2O = (glutathione)4[2Fe(III)-2S] cluster(out) + ADP + phosphate + H(+)</text>
        <dbReference type="Rhea" id="RHEA:67028"/>
        <dbReference type="ChEBI" id="CHEBI:15377"/>
        <dbReference type="ChEBI" id="CHEBI:15378"/>
        <dbReference type="ChEBI" id="CHEBI:30616"/>
        <dbReference type="ChEBI" id="CHEBI:43474"/>
        <dbReference type="ChEBI" id="CHEBI:167627"/>
        <dbReference type="ChEBI" id="CHEBI:456216"/>
    </reaction>
    <physiologicalReaction direction="left-to-right" evidence="1">
        <dbReference type="Rhea" id="RHEA:67029"/>
    </physiologicalReaction>
</comment>
<comment type="subunit">
    <text evidence="1 9">Homodimer or heterodimer. Interacts with C10orf88/PAAT. Forms a complex with ABCB10 and FECH, where a dimeric FECH bridges ABCB7 and ABCB10 homodimers; this complex may be required for cellular iron homeostasis, mitochondrial function and heme biosynthesis (By similarity). Interacts with FECH (By similarity). Interacts with ATP5F1A (PubMed:31511561). Interacts with COX4I1; this interaction allows the regulation of cellular iron homeostasis and cellular reactive oxygen species (ROS) levels in cardiomyocytes (PubMed:31511561).</text>
</comment>
<comment type="subcellular location">
    <subcellularLocation>
        <location evidence="2">Mitochondrion inner membrane</location>
        <topology evidence="2">Multi-pass membrane protein</topology>
    </subcellularLocation>
</comment>
<comment type="similarity">
    <text evidence="10">Belongs to the ABC transporter superfamily. ABCB family. Heavy Metal importer (TC 3.A.1.210) subfamily.</text>
</comment>
<organism>
    <name type="scientific">Rattus norvegicus</name>
    <name type="common">Rat</name>
    <dbReference type="NCBI Taxonomy" id="10116"/>
    <lineage>
        <taxon>Eukaryota</taxon>
        <taxon>Metazoa</taxon>
        <taxon>Chordata</taxon>
        <taxon>Craniata</taxon>
        <taxon>Vertebrata</taxon>
        <taxon>Euteleostomi</taxon>
        <taxon>Mammalia</taxon>
        <taxon>Eutheria</taxon>
        <taxon>Euarchontoglires</taxon>
        <taxon>Glires</taxon>
        <taxon>Rodentia</taxon>
        <taxon>Myomorpha</taxon>
        <taxon>Muroidea</taxon>
        <taxon>Muridae</taxon>
        <taxon>Murinae</taxon>
        <taxon>Rattus</taxon>
    </lineage>
</organism>
<proteinExistence type="evidence at protein level"/>
<sequence>MALLAIHSWRWAAAAVAFEKHKHSAVLTRSLVSICGSGLRWSSYQSGASGSARLSQTTESLRNSTQQRWEKNNSRQLLDASKVLQAWPLIEKRTCWHGHAGGGLHTDPKEGLKDVDTRKIIKAMLSYVWPKDRPDLRARVAISLGFLGGAKAMNIVVPFMFKYAVDSLNQMSGNMLNLSDAPNTVATMATAVLIGYGVSRAGAAFFNEVRNAVFGKVAQNSIRRIAKNVFLHLHNLDLGFHLSRQTGALSKAIDRGTRGISFVLSALVFNLLPIVFEMTLVSSVLYYKCGAQFALVTLGTLGAYTAFTVAVTRWRTRFRIEMNKADNDAGNAAIDSLLNYETVKYFNNEKYEAQRYDGFLKTYETASLKSTSTLAMLNFGQSAIFSVGLTAIMVLASQGIVAGALTVGDLVMVNGLLFQLSLPLNFLGTVYRETRQALIDMNTLFTLLKVDTRIKDKAMASPLQITPQTATVAFDNVHFEYIEGQKVLSGVSFEVPAGKKVAIVGGSGSGKSTIVRLLFRFYEPQKGSIYLAGQNIQDVSLESLRRAVGVVPQDAVLFHNTIYYNLLYGNINASPEEVYAVAKLAGLHDAILRMPHGYDTQVGERGLKLSGGEKQRVAIARAILKDPPVILYDEATSSLDSITEETILGAMRDVVKHRTSIFIAHRLSTVVDADEIIVLSQGKVAERGTHYGLLANSSSIYSEMWHTQSTRIQNHDNLGWDAKKESLSKEEERKKLQEEIVNSVKGCGNCSC</sequence>
<keyword id="KW-0007">Acetylation</keyword>
<keyword id="KW-0067">ATP-binding</keyword>
<keyword id="KW-0472">Membrane</keyword>
<keyword id="KW-0496">Mitochondrion</keyword>
<keyword id="KW-0999">Mitochondrion inner membrane</keyword>
<keyword id="KW-0547">Nucleotide-binding</keyword>
<keyword id="KW-0597">Phosphoprotein</keyword>
<keyword id="KW-1185">Reference proteome</keyword>
<keyword id="KW-0809">Transit peptide</keyword>
<keyword id="KW-0812">Transmembrane</keyword>
<keyword id="KW-1133">Transmembrane helix</keyword>
<keyword id="KW-0813">Transport</keyword>
<gene>
    <name evidence="4" type="primary">Abcb7</name>
</gene>
<reference key="1">
    <citation type="submission" date="2004-01" db="EMBL/GenBank/DDBJ databases">
        <title>Characterization of Abcb7 in rat hepatocytes.</title>
        <authorList>
            <person name="Jakimenko A."/>
            <person name="Petry F."/>
            <person name="Hirsch-Ernst K.I."/>
        </authorList>
    </citation>
    <scope>NUCLEOTIDE SEQUENCE [MRNA]</scope>
    <source>
        <strain>Wistar</strain>
    </source>
</reference>
<reference key="2">
    <citation type="journal article" date="2006" name="Proc. Natl. Acad. Sci. U.S.A.">
        <title>Quantitative phosphoproteomics of vasopressin-sensitive renal cells: regulation of aquaporin-2 phosphorylation at two sites.</title>
        <authorList>
            <person name="Hoffert J.D."/>
            <person name="Pisitkun T."/>
            <person name="Wang G."/>
            <person name="Shen R.-F."/>
            <person name="Knepper M.A."/>
        </authorList>
    </citation>
    <scope>PHOSPHORYLATION [LARGE SCALE ANALYSIS] AT SER-336; TYR-340 AND THR-342</scope>
    <scope>IDENTIFICATION BY MASS SPECTROMETRY [LARGE SCALE ANALYSIS]</scope>
</reference>
<reference key="3">
    <citation type="journal article" date="2019" name="Sci. Rep.">
        <title>Chronic Pressure Overload Results in Deficiency of Mitochondrial Membrane Transporter ABCB7 Which Contributes to Iron Overload, Mitochondrial Dysfunction, Metabolic Shift and Worsens Cardiac Function.</title>
        <authorList>
            <person name="Kumar V."/>
            <person name="Kumar A."/>
            <person name="Sanawar R."/>
            <person name="Jaleel A."/>
            <person name="Santhosh Kumar T.R."/>
            <person name="Kartha C.C."/>
        </authorList>
    </citation>
    <scope>FUNCTION</scope>
    <scope>INTERACTION WITH COX4I1 AND ATP5F1A</scope>
</reference>
<name>ABCB7_RAT</name>
<dbReference type="EMBL" id="AJ621255">
    <property type="protein sequence ID" value="CAF18435.1"/>
    <property type="molecule type" value="mRNA"/>
</dbReference>
<dbReference type="RefSeq" id="NP_997683.1">
    <property type="nucleotide sequence ID" value="NM_212518.1"/>
</dbReference>
<dbReference type="SMR" id="Q704E8"/>
<dbReference type="BioGRID" id="257169">
    <property type="interactions" value="1"/>
</dbReference>
<dbReference type="FunCoup" id="Q704E8">
    <property type="interactions" value="2222"/>
</dbReference>
<dbReference type="STRING" id="10116.ENSRNOP00000003739"/>
<dbReference type="iPTMnet" id="Q704E8"/>
<dbReference type="PhosphoSitePlus" id="Q704E8"/>
<dbReference type="jPOST" id="Q704E8"/>
<dbReference type="PaxDb" id="10116-ENSRNOP00000003739"/>
<dbReference type="GeneID" id="302395"/>
<dbReference type="KEGG" id="rno:302395"/>
<dbReference type="UCSC" id="RGD:1303086">
    <property type="organism name" value="rat"/>
</dbReference>
<dbReference type="AGR" id="RGD:1303086"/>
<dbReference type="CTD" id="22"/>
<dbReference type="RGD" id="1303086">
    <property type="gene designation" value="Abcb7"/>
</dbReference>
<dbReference type="eggNOG" id="KOG0057">
    <property type="taxonomic scope" value="Eukaryota"/>
</dbReference>
<dbReference type="InParanoid" id="Q704E8"/>
<dbReference type="OrthoDB" id="37044at9989"/>
<dbReference type="PhylomeDB" id="Q704E8"/>
<dbReference type="Reactome" id="R-RNO-1369007">
    <property type="pathway name" value="Mitochondrial ABC transporters"/>
</dbReference>
<dbReference type="PRO" id="PR:Q704E8"/>
<dbReference type="Proteomes" id="UP000002494">
    <property type="component" value="Unplaced"/>
</dbReference>
<dbReference type="GO" id="GO:0005743">
    <property type="term" value="C:mitochondrial inner membrane"/>
    <property type="evidence" value="ECO:0000266"/>
    <property type="project" value="RGD"/>
</dbReference>
<dbReference type="GO" id="GO:0005739">
    <property type="term" value="C:mitochondrion"/>
    <property type="evidence" value="ECO:0000250"/>
    <property type="project" value="UniProtKB"/>
</dbReference>
<dbReference type="GO" id="GO:0140481">
    <property type="term" value="F:ABC-type iron-sulfur cluster transporter activity"/>
    <property type="evidence" value="ECO:0000250"/>
    <property type="project" value="UniProtKB"/>
</dbReference>
<dbReference type="GO" id="GO:0005524">
    <property type="term" value="F:ATP binding"/>
    <property type="evidence" value="ECO:0007669"/>
    <property type="project" value="UniProtKB-KW"/>
</dbReference>
<dbReference type="GO" id="GO:0016887">
    <property type="term" value="F:ATP hydrolysis activity"/>
    <property type="evidence" value="ECO:0007669"/>
    <property type="project" value="InterPro"/>
</dbReference>
<dbReference type="GO" id="GO:0042626">
    <property type="term" value="F:ATPase-coupled transmembrane transporter activity"/>
    <property type="evidence" value="ECO:0000318"/>
    <property type="project" value="GO_Central"/>
</dbReference>
<dbReference type="GO" id="GO:0042802">
    <property type="term" value="F:identical protein binding"/>
    <property type="evidence" value="ECO:0000266"/>
    <property type="project" value="RGD"/>
</dbReference>
<dbReference type="GO" id="GO:0042803">
    <property type="term" value="F:protein homodimerization activity"/>
    <property type="evidence" value="ECO:0000266"/>
    <property type="project" value="RGD"/>
</dbReference>
<dbReference type="GO" id="GO:0006879">
    <property type="term" value="P:intracellular iron ion homeostasis"/>
    <property type="evidence" value="ECO:0000314"/>
    <property type="project" value="UniProtKB"/>
</dbReference>
<dbReference type="GO" id="GO:0034755">
    <property type="term" value="P:iron ion transmembrane transport"/>
    <property type="evidence" value="ECO:0000250"/>
    <property type="project" value="UniProtKB"/>
</dbReference>
<dbReference type="GO" id="GO:0016226">
    <property type="term" value="P:iron-sulfur cluster assembly"/>
    <property type="evidence" value="ECO:0000250"/>
    <property type="project" value="UniProtKB"/>
</dbReference>
<dbReference type="GO" id="GO:0140466">
    <property type="term" value="P:iron-sulfur cluster export from the mitochondrion"/>
    <property type="evidence" value="ECO:0000250"/>
    <property type="project" value="UniProtKB"/>
</dbReference>
<dbReference type="GO" id="GO:1903427">
    <property type="term" value="P:negative regulation of reactive oxygen species biosynthetic process"/>
    <property type="evidence" value="ECO:0000315"/>
    <property type="project" value="UniProtKB"/>
</dbReference>
<dbReference type="GO" id="GO:0070455">
    <property type="term" value="P:positive regulation of heme biosynthetic process"/>
    <property type="evidence" value="ECO:0000250"/>
    <property type="project" value="UniProtKB"/>
</dbReference>
<dbReference type="GO" id="GO:1903331">
    <property type="term" value="P:positive regulation of iron-sulfur cluster assembly"/>
    <property type="evidence" value="ECO:0000250"/>
    <property type="project" value="UniProtKB"/>
</dbReference>
<dbReference type="GO" id="GO:0055085">
    <property type="term" value="P:transmembrane transport"/>
    <property type="evidence" value="ECO:0000318"/>
    <property type="project" value="GO_Central"/>
</dbReference>
<dbReference type="CDD" id="cd18582">
    <property type="entry name" value="ABC_6TM_ATM1_ABCB7"/>
    <property type="match status" value="1"/>
</dbReference>
<dbReference type="CDD" id="cd03253">
    <property type="entry name" value="ABCC_ATM1_transporter"/>
    <property type="match status" value="1"/>
</dbReference>
<dbReference type="FunFam" id="1.20.1560.10:FF:000004">
    <property type="entry name" value="ATP-binding cassette sub-family B member 7"/>
    <property type="match status" value="1"/>
</dbReference>
<dbReference type="FunFam" id="3.40.50.300:FF:000186">
    <property type="entry name" value="ATP-binding cassette sub-family B member 7, mitochondrial"/>
    <property type="match status" value="1"/>
</dbReference>
<dbReference type="Gene3D" id="1.20.1560.10">
    <property type="entry name" value="ABC transporter type 1, transmembrane domain"/>
    <property type="match status" value="1"/>
</dbReference>
<dbReference type="Gene3D" id="3.40.50.300">
    <property type="entry name" value="P-loop containing nucleotide triphosphate hydrolases"/>
    <property type="match status" value="1"/>
</dbReference>
<dbReference type="InterPro" id="IPR003593">
    <property type="entry name" value="AAA+_ATPase"/>
</dbReference>
<dbReference type="InterPro" id="IPR011527">
    <property type="entry name" value="ABC1_TM_dom"/>
</dbReference>
<dbReference type="InterPro" id="IPR036640">
    <property type="entry name" value="ABC1_TM_sf"/>
</dbReference>
<dbReference type="InterPro" id="IPR003439">
    <property type="entry name" value="ABC_transporter-like_ATP-bd"/>
</dbReference>
<dbReference type="InterPro" id="IPR017871">
    <property type="entry name" value="ABC_transporter-like_CS"/>
</dbReference>
<dbReference type="InterPro" id="IPR027417">
    <property type="entry name" value="P-loop_NTPase"/>
</dbReference>
<dbReference type="InterPro" id="IPR039421">
    <property type="entry name" value="Type_1_exporter"/>
</dbReference>
<dbReference type="PANTHER" id="PTHR24221">
    <property type="entry name" value="ATP-BINDING CASSETTE SUB-FAMILY B"/>
    <property type="match status" value="1"/>
</dbReference>
<dbReference type="PANTHER" id="PTHR24221:SF402">
    <property type="entry name" value="IRON-SULFUR CLUSTERS TRANSPORTER ABCB7, MITOCHONDRIAL"/>
    <property type="match status" value="1"/>
</dbReference>
<dbReference type="Pfam" id="PF00664">
    <property type="entry name" value="ABC_membrane"/>
    <property type="match status" value="1"/>
</dbReference>
<dbReference type="Pfam" id="PF00005">
    <property type="entry name" value="ABC_tran"/>
    <property type="match status" value="1"/>
</dbReference>
<dbReference type="SMART" id="SM00382">
    <property type="entry name" value="AAA"/>
    <property type="match status" value="1"/>
</dbReference>
<dbReference type="SUPFAM" id="SSF90123">
    <property type="entry name" value="ABC transporter transmembrane region"/>
    <property type="match status" value="1"/>
</dbReference>
<dbReference type="SUPFAM" id="SSF52540">
    <property type="entry name" value="P-loop containing nucleoside triphosphate hydrolases"/>
    <property type="match status" value="1"/>
</dbReference>
<dbReference type="PROSITE" id="PS50929">
    <property type="entry name" value="ABC_TM1F"/>
    <property type="match status" value="1"/>
</dbReference>
<dbReference type="PROSITE" id="PS00211">
    <property type="entry name" value="ABC_TRANSPORTER_1"/>
    <property type="match status" value="1"/>
</dbReference>
<dbReference type="PROSITE" id="PS50893">
    <property type="entry name" value="ABC_TRANSPORTER_2"/>
    <property type="match status" value="1"/>
</dbReference>
<accession>Q704E8</accession>
<evidence type="ECO:0000250" key="1">
    <source>
        <dbReference type="UniProtKB" id="O75027"/>
    </source>
</evidence>
<evidence type="ECO:0000250" key="2">
    <source>
        <dbReference type="UniProtKB" id="P40416"/>
    </source>
</evidence>
<evidence type="ECO:0000250" key="3">
    <source>
        <dbReference type="UniProtKB" id="Q2G506"/>
    </source>
</evidence>
<evidence type="ECO:0000250" key="4">
    <source>
        <dbReference type="UniProtKB" id="Q61102"/>
    </source>
</evidence>
<evidence type="ECO:0000250" key="5">
    <source>
        <dbReference type="UniProtKB" id="Q9NP58"/>
    </source>
</evidence>
<evidence type="ECO:0000255" key="6"/>
<evidence type="ECO:0000255" key="7">
    <source>
        <dbReference type="PROSITE-ProRule" id="PRU00434"/>
    </source>
</evidence>
<evidence type="ECO:0000255" key="8">
    <source>
        <dbReference type="PROSITE-ProRule" id="PRU00441"/>
    </source>
</evidence>
<evidence type="ECO:0000269" key="9">
    <source>
    </source>
</evidence>
<evidence type="ECO:0000305" key="10"/>
<evidence type="ECO:0007744" key="11">
    <source>
    </source>
</evidence>
<feature type="transit peptide" description="Mitochondrion" evidence="6">
    <location>
        <begin position="1"/>
        <end position="22"/>
    </location>
</feature>
<feature type="chain" id="PRO_0000000250" description="Iron-sulfur clusters transporter ABCB7, mitochondrial">
    <location>
        <begin position="23"/>
        <end position="752"/>
    </location>
</feature>
<feature type="topological domain" description="Mitochondrial matrix" evidence="2">
    <location>
        <begin position="23"/>
        <end position="140"/>
    </location>
</feature>
<feature type="transmembrane region" description="Helical" evidence="8">
    <location>
        <begin position="141"/>
        <end position="161"/>
    </location>
</feature>
<feature type="topological domain" description="Mitochondrial intermembrane" evidence="2">
    <location>
        <begin position="162"/>
        <end position="185"/>
    </location>
</feature>
<feature type="transmembrane region" description="Helical" evidence="8">
    <location>
        <begin position="186"/>
        <end position="206"/>
    </location>
</feature>
<feature type="topological domain" description="Mitochondrial matrix" evidence="2">
    <location>
        <begin position="207"/>
        <end position="259"/>
    </location>
</feature>
<feature type="transmembrane region" description="Helical" evidence="8">
    <location>
        <begin position="260"/>
        <end position="280"/>
    </location>
</feature>
<feature type="topological domain" description="Mitochondrial intermembrane" evidence="2">
    <location>
        <begin position="281"/>
        <end position="290"/>
    </location>
</feature>
<feature type="transmembrane region" description="Helical" evidence="8">
    <location>
        <begin position="291"/>
        <end position="311"/>
    </location>
</feature>
<feature type="topological domain" description="Mitochondrial matrix" evidence="2">
    <location>
        <begin position="312"/>
        <end position="382"/>
    </location>
</feature>
<feature type="transmembrane region" description="Helical" evidence="8">
    <location>
        <begin position="383"/>
        <end position="403"/>
    </location>
</feature>
<feature type="topological domain" description="Mitochondrial intermembrane" evidence="2">
    <location>
        <begin position="404"/>
        <end position="409"/>
    </location>
</feature>
<feature type="transmembrane region" description="Helical" evidence="8">
    <location>
        <begin position="410"/>
        <end position="430"/>
    </location>
</feature>
<feature type="topological domain" description="Mitochondrial matrix" evidence="2">
    <location>
        <begin position="431"/>
        <end position="752"/>
    </location>
</feature>
<feature type="domain" description="ABC transmembrane type-1" evidence="8">
    <location>
        <begin position="140"/>
        <end position="436"/>
    </location>
</feature>
<feature type="domain" description="ABC transporter" evidence="7">
    <location>
        <begin position="472"/>
        <end position="706"/>
    </location>
</feature>
<feature type="binding site" evidence="2">
    <location>
        <begin position="315"/>
        <end position="319"/>
    </location>
    <ligand>
        <name>glutathione</name>
        <dbReference type="ChEBI" id="CHEBI:57925"/>
    </ligand>
</feature>
<feature type="binding site" evidence="2">
    <location>
        <begin position="378"/>
        <end position="381"/>
    </location>
    <ligand>
        <name>glutathione</name>
        <dbReference type="ChEBI" id="CHEBI:57925"/>
    </ligand>
</feature>
<feature type="binding site" evidence="3">
    <location>
        <position position="428"/>
    </location>
    <ligand>
        <name>glutathione</name>
        <dbReference type="ChEBI" id="CHEBI:57925"/>
    </ligand>
</feature>
<feature type="binding site" evidence="5">
    <location>
        <position position="481"/>
    </location>
    <ligand>
        <name>ATP</name>
        <dbReference type="ChEBI" id="CHEBI:30616"/>
    </ligand>
</feature>
<feature type="binding site" evidence="7">
    <location>
        <begin position="505"/>
        <end position="516"/>
    </location>
    <ligand>
        <name>ATP</name>
        <dbReference type="ChEBI" id="CHEBI:30616"/>
    </ligand>
</feature>
<feature type="modified residue" description="N6-acetyllysine" evidence="1">
    <location>
        <position position="216"/>
    </location>
</feature>
<feature type="modified residue" description="N6-acetyllysine" evidence="1">
    <location>
        <position position="251"/>
    </location>
</feature>
<feature type="modified residue" description="Phosphoserine" evidence="11">
    <location>
        <position position="336"/>
    </location>
</feature>
<feature type="modified residue" description="Phosphotyrosine" evidence="11">
    <location>
        <position position="340"/>
    </location>
</feature>
<feature type="modified residue" description="Phosphothreonine" evidence="11">
    <location>
        <position position="342"/>
    </location>
</feature>
<feature type="modified residue" description="N6-acetyllysine" evidence="4">
    <location>
        <position position="350"/>
    </location>
</feature>
<protein>
    <recommendedName>
        <fullName evidence="10">Iron-sulfur clusters transporter ABCB7, mitochondrial</fullName>
    </recommendedName>
    <alternativeName>
        <fullName>ATP-binding cassette sub-family B member 7, mitochondrial</fullName>
    </alternativeName>
    <alternativeName>
        <fullName>ATP-binding cassette transporter 7</fullName>
        <shortName>ABC transporter 7 protein</shortName>
    </alternativeName>
</protein>